<protein>
    <recommendedName>
        <fullName>Putative antiporter subunit mnhF2</fullName>
    </recommendedName>
    <alternativeName>
        <fullName>Mrp complex subunit F2</fullName>
    </alternativeName>
    <alternativeName>
        <fullName>Putative NADH-ubiquinone oxidoreductase subunit mnhF2</fullName>
    </alternativeName>
</protein>
<accession>Q2YSV2</accession>
<evidence type="ECO:0000250" key="1"/>
<evidence type="ECO:0000255" key="2"/>
<evidence type="ECO:0000305" key="3"/>
<feature type="chain" id="PRO_0000372191" description="Putative antiporter subunit mnhF2">
    <location>
        <begin position="1"/>
        <end position="100"/>
    </location>
</feature>
<feature type="transmembrane region" description="Helical" evidence="2">
    <location>
        <begin position="5"/>
        <end position="25"/>
    </location>
</feature>
<feature type="transmembrane region" description="Helical" evidence="2">
    <location>
        <begin position="38"/>
        <end position="60"/>
    </location>
</feature>
<feature type="transmembrane region" description="Helical" evidence="2">
    <location>
        <begin position="70"/>
        <end position="92"/>
    </location>
</feature>
<organism>
    <name type="scientific">Staphylococcus aureus (strain bovine RF122 / ET3-1)</name>
    <dbReference type="NCBI Taxonomy" id="273036"/>
    <lineage>
        <taxon>Bacteria</taxon>
        <taxon>Bacillati</taxon>
        <taxon>Bacillota</taxon>
        <taxon>Bacilli</taxon>
        <taxon>Bacillales</taxon>
        <taxon>Staphylococcaceae</taxon>
        <taxon>Staphylococcus</taxon>
    </lineage>
</organism>
<comment type="subunit">
    <text evidence="1">May form a heterooligomeric complex that consists of seven subunits: mnhA2, mnhB2, mnhC2, mnhD2, mnhE2, mnhF2 and mnhG2.</text>
</comment>
<comment type="subcellular location">
    <subcellularLocation>
        <location evidence="3">Cell membrane</location>
        <topology evidence="3">Multi-pass membrane protein</topology>
    </subcellularLocation>
</comment>
<comment type="similarity">
    <text evidence="3">Belongs to the CPA3 antiporters (TC 2.A.63) subunit F family.</text>
</comment>
<name>MNHF2_STAAB</name>
<keyword id="KW-0050">Antiport</keyword>
<keyword id="KW-1003">Cell membrane</keyword>
<keyword id="KW-0406">Ion transport</keyword>
<keyword id="KW-0472">Membrane</keyword>
<keyword id="KW-0812">Transmembrane</keyword>
<keyword id="KW-1133">Transmembrane helix</keyword>
<keyword id="KW-0813">Transport</keyword>
<sequence>MIQTITHIMIISSLIIFGIALIICLFRLIKGPTTADRVVTFDTTSAVVMSIVGVLSVLMGTVSFLDSIMLIAIISFVSSVSISRFIGGGHVFNGNNKRNL</sequence>
<dbReference type="EMBL" id="AJ938182">
    <property type="protein sequence ID" value="CAI80266.1"/>
    <property type="molecule type" value="Genomic_DNA"/>
</dbReference>
<dbReference type="RefSeq" id="WP_000616642.1">
    <property type="nucleotide sequence ID" value="NC_007622.1"/>
</dbReference>
<dbReference type="SMR" id="Q2YSV2"/>
<dbReference type="KEGG" id="sab:SAB0578"/>
<dbReference type="HOGENOM" id="CLU_125825_1_3_9"/>
<dbReference type="GO" id="GO:0005886">
    <property type="term" value="C:plasma membrane"/>
    <property type="evidence" value="ECO:0007669"/>
    <property type="project" value="UniProtKB-SubCell"/>
</dbReference>
<dbReference type="GO" id="GO:0015385">
    <property type="term" value="F:sodium:proton antiporter activity"/>
    <property type="evidence" value="ECO:0007669"/>
    <property type="project" value="TreeGrafter"/>
</dbReference>
<dbReference type="InterPro" id="IPR007208">
    <property type="entry name" value="MrpF/PhaF-like"/>
</dbReference>
<dbReference type="NCBIfam" id="NF009300">
    <property type="entry name" value="PRK12657.1"/>
    <property type="match status" value="1"/>
</dbReference>
<dbReference type="PANTHER" id="PTHR34702">
    <property type="entry name" value="NA(+)/H(+) ANTIPORTER SUBUNIT F1"/>
    <property type="match status" value="1"/>
</dbReference>
<dbReference type="PANTHER" id="PTHR34702:SF1">
    <property type="entry name" value="NA(+)_H(+) ANTIPORTER SUBUNIT F"/>
    <property type="match status" value="1"/>
</dbReference>
<dbReference type="Pfam" id="PF04066">
    <property type="entry name" value="MrpF_PhaF"/>
    <property type="match status" value="1"/>
</dbReference>
<dbReference type="PIRSF" id="PIRSF028784">
    <property type="entry name" value="MrpF"/>
    <property type="match status" value="1"/>
</dbReference>
<proteinExistence type="inferred from homology"/>
<gene>
    <name type="primary">mnhF2</name>
    <name type="synonym">mrpF2</name>
    <name type="ordered locus">SAB0578</name>
</gene>
<reference key="1">
    <citation type="journal article" date="2007" name="PLoS ONE">
        <title>Molecular correlates of host specialization in Staphylococcus aureus.</title>
        <authorList>
            <person name="Herron-Olson L."/>
            <person name="Fitzgerald J.R."/>
            <person name="Musser J.M."/>
            <person name="Kapur V."/>
        </authorList>
    </citation>
    <scope>NUCLEOTIDE SEQUENCE [LARGE SCALE GENOMIC DNA]</scope>
    <source>
        <strain>bovine RF122 / ET3-1</strain>
    </source>
</reference>